<feature type="chain" id="PRO_0000388213" description="ATPase GET3">
    <location>
        <begin position="1"/>
        <end position="331"/>
    </location>
</feature>
<feature type="active site" evidence="1">
    <location>
        <position position="61"/>
    </location>
</feature>
<feature type="binding site" evidence="1">
    <location>
        <begin position="32"/>
        <end position="39"/>
    </location>
    <ligand>
        <name>ATP</name>
        <dbReference type="ChEBI" id="CHEBI:30616"/>
    </ligand>
</feature>
<feature type="binding site" evidence="1">
    <location>
        <position position="235"/>
    </location>
    <ligand>
        <name>ATP</name>
        <dbReference type="ChEBI" id="CHEBI:30616"/>
    </ligand>
</feature>
<feature type="binding site" evidence="1">
    <location>
        <position position="262"/>
    </location>
    <ligand>
        <name>ATP</name>
        <dbReference type="ChEBI" id="CHEBI:30616"/>
    </ligand>
</feature>
<feature type="binding site" evidence="1">
    <location>
        <position position="273"/>
    </location>
    <ligand>
        <name>Zn(2+)</name>
        <dbReference type="ChEBI" id="CHEBI:29105"/>
        <note>ligand shared between dimeric partners</note>
    </ligand>
</feature>
<feature type="binding site" evidence="1">
    <location>
        <position position="276"/>
    </location>
    <ligand>
        <name>Zn(2+)</name>
        <dbReference type="ChEBI" id="CHEBI:29105"/>
        <note>ligand shared between dimeric partners</note>
    </ligand>
</feature>
<accession>A8Q0M1</accession>
<gene>
    <name evidence="1" type="primary">GET3</name>
    <name type="ORF">MGL_2053</name>
</gene>
<sequence>MATTTTVDDAQPPTLQNILDQKSLKWIFCGGKGGVGKTTTSCSLAIQLAKVRESVLLISTDPAHNLSDAFGQKFGREAVKVNGFSNLSAMEIDPTSSMQEMIEQSEQRGGALAPFMQDLAFAIPGVDEAMGFAEIMKLVKSMEYSVVVFDTAPTGHTLRFLSFPSVLEKALTKFSSFGKSLGPMFQQFQSMMGGGANAQEDMFAKLEGMRQVITEVNSQFKDETKTTFVCVCIAEFLSLYETERLIQELTQYGIDTHAIVCNQLLYPPPGSQCEHCRVRKAMQDKYVHEMMDLYAEDFNVVKIPLLTEEVRGPEKLSSLSEYLMHPYQPPQ</sequence>
<dbReference type="EC" id="3.6.-.-" evidence="1"/>
<dbReference type="EMBL" id="AAYY01000006">
    <property type="protein sequence ID" value="EDP43840.1"/>
    <property type="molecule type" value="Genomic_DNA"/>
</dbReference>
<dbReference type="RefSeq" id="XP_001731054.1">
    <property type="nucleotide sequence ID" value="XM_001731002.1"/>
</dbReference>
<dbReference type="SMR" id="A8Q0M1"/>
<dbReference type="FunCoup" id="A8Q0M1">
    <property type="interactions" value="490"/>
</dbReference>
<dbReference type="STRING" id="425265.A8Q0M1"/>
<dbReference type="GeneID" id="5855361"/>
<dbReference type="KEGG" id="mgl:MGL_2053"/>
<dbReference type="VEuPathDB" id="FungiDB:MGL_2053"/>
<dbReference type="InParanoid" id="A8Q0M1"/>
<dbReference type="OMA" id="MDAPYEF"/>
<dbReference type="OrthoDB" id="1770at2759"/>
<dbReference type="Proteomes" id="UP000008837">
    <property type="component" value="Unassembled WGS sequence"/>
</dbReference>
<dbReference type="GO" id="GO:0043529">
    <property type="term" value="C:GET complex"/>
    <property type="evidence" value="ECO:0007669"/>
    <property type="project" value="TreeGrafter"/>
</dbReference>
<dbReference type="GO" id="GO:0005524">
    <property type="term" value="F:ATP binding"/>
    <property type="evidence" value="ECO:0007669"/>
    <property type="project" value="UniProtKB-UniRule"/>
</dbReference>
<dbReference type="GO" id="GO:0016887">
    <property type="term" value="F:ATP hydrolysis activity"/>
    <property type="evidence" value="ECO:0007669"/>
    <property type="project" value="InterPro"/>
</dbReference>
<dbReference type="GO" id="GO:0046872">
    <property type="term" value="F:metal ion binding"/>
    <property type="evidence" value="ECO:0007669"/>
    <property type="project" value="UniProtKB-KW"/>
</dbReference>
<dbReference type="GO" id="GO:0071816">
    <property type="term" value="P:tail-anchored membrane protein insertion into ER membrane"/>
    <property type="evidence" value="ECO:0007669"/>
    <property type="project" value="TreeGrafter"/>
</dbReference>
<dbReference type="CDD" id="cd02035">
    <property type="entry name" value="ArsA"/>
    <property type="match status" value="1"/>
</dbReference>
<dbReference type="FunFam" id="3.40.50.300:FF:000235">
    <property type="entry name" value="ATPase ASNA1"/>
    <property type="match status" value="1"/>
</dbReference>
<dbReference type="Gene3D" id="3.40.50.300">
    <property type="entry name" value="P-loop containing nucleotide triphosphate hydrolases"/>
    <property type="match status" value="1"/>
</dbReference>
<dbReference type="HAMAP" id="MF_03112">
    <property type="entry name" value="Asna1_Get3"/>
    <property type="match status" value="1"/>
</dbReference>
<dbReference type="InterPro" id="IPR025723">
    <property type="entry name" value="Anion-transp_ATPase-like_dom"/>
</dbReference>
<dbReference type="InterPro" id="IPR016300">
    <property type="entry name" value="ATPase_ArsA/GET3"/>
</dbReference>
<dbReference type="InterPro" id="IPR027542">
    <property type="entry name" value="ATPase_ArsA/GET3_euk"/>
</dbReference>
<dbReference type="InterPro" id="IPR027417">
    <property type="entry name" value="P-loop_NTPase"/>
</dbReference>
<dbReference type="NCBIfam" id="TIGR00345">
    <property type="entry name" value="GET3_arsA_TRC40"/>
    <property type="match status" value="1"/>
</dbReference>
<dbReference type="PANTHER" id="PTHR10803">
    <property type="entry name" value="ARSENICAL PUMP-DRIVING ATPASE ARSENITE-TRANSLOCATING ATPASE"/>
    <property type="match status" value="1"/>
</dbReference>
<dbReference type="PANTHER" id="PTHR10803:SF3">
    <property type="entry name" value="ATPASE GET3"/>
    <property type="match status" value="1"/>
</dbReference>
<dbReference type="Pfam" id="PF02374">
    <property type="entry name" value="ArsA_ATPase"/>
    <property type="match status" value="1"/>
</dbReference>
<dbReference type="SUPFAM" id="SSF52540">
    <property type="entry name" value="P-loop containing nucleoside triphosphate hydrolases"/>
    <property type="match status" value="1"/>
</dbReference>
<proteinExistence type="inferred from homology"/>
<comment type="function">
    <text evidence="1">ATPase required for the post-translational delivery of tail-anchored (TA) proteins to the endoplasmic reticulum. Recognizes and selectively binds the transmembrane domain of TA proteins in the cytosol. This complex then targets to the endoplasmic reticulum by membrane-bound receptors, where the tail-anchored protein is released for insertion. This process is regulated by ATP binding and hydrolysis. ATP binding drives the homodimer towards the closed dimer state, facilitating recognition of newly synthesized TA membrane proteins. ATP hydrolysis is required for insertion. Subsequently, the homodimer reverts towards the open dimer state, lowering its affinity for the membrane-bound receptor, and returning it to the cytosol to initiate a new round of targeting.</text>
</comment>
<comment type="subunit">
    <text evidence="1">Homodimer.</text>
</comment>
<comment type="subcellular location">
    <subcellularLocation>
        <location evidence="1">Cytoplasm</location>
    </subcellularLocation>
    <subcellularLocation>
        <location evidence="1">Endoplasmic reticulum</location>
    </subcellularLocation>
</comment>
<comment type="similarity">
    <text evidence="1">Belongs to the arsA ATPase family.</text>
</comment>
<organism>
    <name type="scientific">Malassezia globosa (strain ATCC MYA-4612 / CBS 7966)</name>
    <name type="common">Dandruff-associated fungus</name>
    <dbReference type="NCBI Taxonomy" id="425265"/>
    <lineage>
        <taxon>Eukaryota</taxon>
        <taxon>Fungi</taxon>
        <taxon>Dikarya</taxon>
        <taxon>Basidiomycota</taxon>
        <taxon>Ustilaginomycotina</taxon>
        <taxon>Malasseziomycetes</taxon>
        <taxon>Malasseziales</taxon>
        <taxon>Malasseziaceae</taxon>
        <taxon>Malassezia</taxon>
    </lineage>
</organism>
<name>GET3_MALGO</name>
<reference key="1">
    <citation type="journal article" date="2007" name="Proc. Natl. Acad. Sci. U.S.A.">
        <title>Dandruff-associated Malassezia genomes reveal convergent and divergent virulence traits shared with plant and human fungal pathogens.</title>
        <authorList>
            <person name="Xu J."/>
            <person name="Saunders C.W."/>
            <person name="Hu P."/>
            <person name="Grant R.A."/>
            <person name="Boekhout T."/>
            <person name="Kuramae E.E."/>
            <person name="Kronstad J.W."/>
            <person name="DeAngelis Y.M."/>
            <person name="Reeder N.L."/>
            <person name="Johnstone K.R."/>
            <person name="Leland M."/>
            <person name="Fieno A.M."/>
            <person name="Begley W.M."/>
            <person name="Sun Y."/>
            <person name="Lacey M.P."/>
            <person name="Chaudhary T."/>
            <person name="Keough T."/>
            <person name="Chu L."/>
            <person name="Sears R."/>
            <person name="Yuan B."/>
            <person name="Dawson T.L. Jr."/>
        </authorList>
    </citation>
    <scope>NUCLEOTIDE SEQUENCE [LARGE SCALE GENOMIC DNA]</scope>
    <source>
        <strain>ATCC MYA-4612 / CBS 7966</strain>
    </source>
</reference>
<keyword id="KW-0067">ATP-binding</keyword>
<keyword id="KW-0963">Cytoplasm</keyword>
<keyword id="KW-0256">Endoplasmic reticulum</keyword>
<keyword id="KW-0378">Hydrolase</keyword>
<keyword id="KW-0479">Metal-binding</keyword>
<keyword id="KW-0547">Nucleotide-binding</keyword>
<keyword id="KW-1185">Reference proteome</keyword>
<keyword id="KW-0813">Transport</keyword>
<keyword id="KW-0862">Zinc</keyword>
<protein>
    <recommendedName>
        <fullName evidence="1">ATPase GET3</fullName>
        <ecNumber evidence="1">3.6.-.-</ecNumber>
    </recommendedName>
    <alternativeName>
        <fullName evidence="1">Arsenical pump-driving ATPase</fullName>
    </alternativeName>
    <alternativeName>
        <fullName evidence="1">Arsenite-stimulated ATPase</fullName>
    </alternativeName>
    <alternativeName>
        <fullName evidence="1">Golgi to ER traffic protein 3</fullName>
    </alternativeName>
    <alternativeName>
        <fullName evidence="1">Guided entry of tail-anchored proteins 3</fullName>
    </alternativeName>
</protein>
<evidence type="ECO:0000255" key="1">
    <source>
        <dbReference type="HAMAP-Rule" id="MF_03112"/>
    </source>
</evidence>